<keyword id="KW-0067">ATP-binding</keyword>
<keyword id="KW-0963">Cytoplasm</keyword>
<keyword id="KW-1015">Disulfide bond</keyword>
<keyword id="KW-0547">Nucleotide-binding</keyword>
<keyword id="KW-0676">Redox-active center</keyword>
<keyword id="KW-0694">RNA-binding</keyword>
<keyword id="KW-0784">Thiamine biosynthesis</keyword>
<keyword id="KW-0808">Transferase</keyword>
<keyword id="KW-0820">tRNA-binding</keyword>
<proteinExistence type="inferred from homology"/>
<comment type="function">
    <text evidence="1">Catalyzes the ATP-dependent transfer of a sulfur to tRNA to produce 4-thiouridine in position 8 of tRNAs, which functions as a near-UV photosensor. Also catalyzes the transfer of sulfur to the sulfur carrier protein ThiS, forming ThiS-thiocarboxylate. This is a step in the synthesis of thiazole, in the thiamine biosynthesis pathway. The sulfur is donated as persulfide by IscS.</text>
</comment>
<comment type="catalytic activity">
    <reaction evidence="1">
        <text>[ThiI sulfur-carrier protein]-S-sulfanyl-L-cysteine + a uridine in tRNA + 2 reduced [2Fe-2S]-[ferredoxin] + ATP + H(+) = [ThiI sulfur-carrier protein]-L-cysteine + a 4-thiouridine in tRNA + 2 oxidized [2Fe-2S]-[ferredoxin] + AMP + diphosphate</text>
        <dbReference type="Rhea" id="RHEA:24176"/>
        <dbReference type="Rhea" id="RHEA-COMP:10000"/>
        <dbReference type="Rhea" id="RHEA-COMP:10001"/>
        <dbReference type="Rhea" id="RHEA-COMP:13337"/>
        <dbReference type="Rhea" id="RHEA-COMP:13338"/>
        <dbReference type="Rhea" id="RHEA-COMP:13339"/>
        <dbReference type="Rhea" id="RHEA-COMP:13340"/>
        <dbReference type="ChEBI" id="CHEBI:15378"/>
        <dbReference type="ChEBI" id="CHEBI:29950"/>
        <dbReference type="ChEBI" id="CHEBI:30616"/>
        <dbReference type="ChEBI" id="CHEBI:33019"/>
        <dbReference type="ChEBI" id="CHEBI:33737"/>
        <dbReference type="ChEBI" id="CHEBI:33738"/>
        <dbReference type="ChEBI" id="CHEBI:61963"/>
        <dbReference type="ChEBI" id="CHEBI:65315"/>
        <dbReference type="ChEBI" id="CHEBI:136798"/>
        <dbReference type="ChEBI" id="CHEBI:456215"/>
        <dbReference type="EC" id="2.8.1.4"/>
    </reaction>
</comment>
<comment type="catalytic activity">
    <reaction evidence="1">
        <text>[ThiS sulfur-carrier protein]-C-terminal Gly-Gly-AMP + S-sulfanyl-L-cysteinyl-[cysteine desulfurase] + AH2 = [ThiS sulfur-carrier protein]-C-terminal-Gly-aminoethanethioate + L-cysteinyl-[cysteine desulfurase] + A + AMP + 2 H(+)</text>
        <dbReference type="Rhea" id="RHEA:43340"/>
        <dbReference type="Rhea" id="RHEA-COMP:12157"/>
        <dbReference type="Rhea" id="RHEA-COMP:12158"/>
        <dbReference type="Rhea" id="RHEA-COMP:12910"/>
        <dbReference type="Rhea" id="RHEA-COMP:19908"/>
        <dbReference type="ChEBI" id="CHEBI:13193"/>
        <dbReference type="ChEBI" id="CHEBI:15378"/>
        <dbReference type="ChEBI" id="CHEBI:17499"/>
        <dbReference type="ChEBI" id="CHEBI:29950"/>
        <dbReference type="ChEBI" id="CHEBI:61963"/>
        <dbReference type="ChEBI" id="CHEBI:90618"/>
        <dbReference type="ChEBI" id="CHEBI:232372"/>
        <dbReference type="ChEBI" id="CHEBI:456215"/>
    </reaction>
</comment>
<comment type="pathway">
    <text evidence="1">Cofactor biosynthesis; thiamine diphosphate biosynthesis.</text>
</comment>
<comment type="subcellular location">
    <subcellularLocation>
        <location evidence="1">Cytoplasm</location>
    </subcellularLocation>
</comment>
<comment type="similarity">
    <text evidence="1">Belongs to the ThiI family.</text>
</comment>
<gene>
    <name evidence="1" type="primary">thiI</name>
    <name type="ordered locus">YPTB0943</name>
</gene>
<protein>
    <recommendedName>
        <fullName evidence="1">tRNA sulfurtransferase</fullName>
        <ecNumber evidence="1">2.8.1.4</ecNumber>
    </recommendedName>
    <alternativeName>
        <fullName evidence="1">Sulfur carrier protein ThiS sulfurtransferase</fullName>
    </alternativeName>
    <alternativeName>
        <fullName evidence="1">Thiamine biosynthesis protein ThiI</fullName>
    </alternativeName>
    <alternativeName>
        <fullName evidence="1">tRNA 4-thiouridine synthase</fullName>
    </alternativeName>
</protein>
<dbReference type="EC" id="2.8.1.4" evidence="1"/>
<dbReference type="EMBL" id="BX936398">
    <property type="protein sequence ID" value="CAH20183.1"/>
    <property type="molecule type" value="Genomic_DNA"/>
</dbReference>
<dbReference type="RefSeq" id="WP_011191864.1">
    <property type="nucleotide sequence ID" value="NC_006155.1"/>
</dbReference>
<dbReference type="SMR" id="Q66DV0"/>
<dbReference type="KEGG" id="ypo:BZ17_1604"/>
<dbReference type="KEGG" id="yps:YPTB0943"/>
<dbReference type="PATRIC" id="fig|273123.14.peg.1701"/>
<dbReference type="UniPathway" id="UPA00060"/>
<dbReference type="Proteomes" id="UP000001011">
    <property type="component" value="Chromosome"/>
</dbReference>
<dbReference type="GO" id="GO:0005829">
    <property type="term" value="C:cytosol"/>
    <property type="evidence" value="ECO:0007669"/>
    <property type="project" value="TreeGrafter"/>
</dbReference>
<dbReference type="GO" id="GO:0005524">
    <property type="term" value="F:ATP binding"/>
    <property type="evidence" value="ECO:0007669"/>
    <property type="project" value="UniProtKB-UniRule"/>
</dbReference>
<dbReference type="GO" id="GO:0004810">
    <property type="term" value="F:CCA tRNA nucleotidyltransferase activity"/>
    <property type="evidence" value="ECO:0007669"/>
    <property type="project" value="InterPro"/>
</dbReference>
<dbReference type="GO" id="GO:0000049">
    <property type="term" value="F:tRNA binding"/>
    <property type="evidence" value="ECO:0007669"/>
    <property type="project" value="UniProtKB-UniRule"/>
</dbReference>
<dbReference type="GO" id="GO:0140741">
    <property type="term" value="F:tRNA-uracil-4 sulfurtransferase activity"/>
    <property type="evidence" value="ECO:0007669"/>
    <property type="project" value="UniProtKB-EC"/>
</dbReference>
<dbReference type="GO" id="GO:0009228">
    <property type="term" value="P:thiamine biosynthetic process"/>
    <property type="evidence" value="ECO:0007669"/>
    <property type="project" value="UniProtKB-KW"/>
</dbReference>
<dbReference type="GO" id="GO:0009229">
    <property type="term" value="P:thiamine diphosphate biosynthetic process"/>
    <property type="evidence" value="ECO:0007669"/>
    <property type="project" value="UniProtKB-UniRule"/>
</dbReference>
<dbReference type="GO" id="GO:0052837">
    <property type="term" value="P:thiazole biosynthetic process"/>
    <property type="evidence" value="ECO:0007669"/>
    <property type="project" value="InterPro"/>
</dbReference>
<dbReference type="GO" id="GO:0002937">
    <property type="term" value="P:tRNA 4-thiouridine biosynthesis"/>
    <property type="evidence" value="ECO:0007669"/>
    <property type="project" value="TreeGrafter"/>
</dbReference>
<dbReference type="CDD" id="cd01712">
    <property type="entry name" value="PPase_ThiI"/>
    <property type="match status" value="1"/>
</dbReference>
<dbReference type="CDD" id="cd00158">
    <property type="entry name" value="RHOD"/>
    <property type="match status" value="1"/>
</dbReference>
<dbReference type="CDD" id="cd11716">
    <property type="entry name" value="THUMP_ThiI"/>
    <property type="match status" value="1"/>
</dbReference>
<dbReference type="FunFam" id="3.30.2130.30:FF:000002">
    <property type="entry name" value="tRNA sulfurtransferase"/>
    <property type="match status" value="1"/>
</dbReference>
<dbReference type="FunFam" id="3.40.250.10:FF:000003">
    <property type="entry name" value="tRNA sulfurtransferase"/>
    <property type="match status" value="1"/>
</dbReference>
<dbReference type="FunFam" id="3.40.50.620:FF:000029">
    <property type="entry name" value="tRNA sulfurtransferase"/>
    <property type="match status" value="1"/>
</dbReference>
<dbReference type="Gene3D" id="3.30.2130.30">
    <property type="match status" value="1"/>
</dbReference>
<dbReference type="Gene3D" id="3.40.50.620">
    <property type="entry name" value="HUPs"/>
    <property type="match status" value="1"/>
</dbReference>
<dbReference type="Gene3D" id="3.40.250.10">
    <property type="entry name" value="Rhodanese-like domain"/>
    <property type="match status" value="1"/>
</dbReference>
<dbReference type="HAMAP" id="MF_00021">
    <property type="entry name" value="ThiI"/>
    <property type="match status" value="1"/>
</dbReference>
<dbReference type="InterPro" id="IPR001763">
    <property type="entry name" value="Rhodanese-like_dom"/>
</dbReference>
<dbReference type="InterPro" id="IPR036873">
    <property type="entry name" value="Rhodanese-like_dom_sf"/>
</dbReference>
<dbReference type="InterPro" id="IPR014729">
    <property type="entry name" value="Rossmann-like_a/b/a_fold"/>
</dbReference>
<dbReference type="InterPro" id="IPR020536">
    <property type="entry name" value="ThiI_AANH"/>
</dbReference>
<dbReference type="InterPro" id="IPR054173">
    <property type="entry name" value="ThiI_fer"/>
</dbReference>
<dbReference type="InterPro" id="IPR049961">
    <property type="entry name" value="ThiI_N"/>
</dbReference>
<dbReference type="InterPro" id="IPR026340">
    <property type="entry name" value="THII_Thiazole_biosynth_dom"/>
</dbReference>
<dbReference type="InterPro" id="IPR004114">
    <property type="entry name" value="THUMP_dom"/>
</dbReference>
<dbReference type="InterPro" id="IPR049962">
    <property type="entry name" value="THUMP_ThiI"/>
</dbReference>
<dbReference type="InterPro" id="IPR003720">
    <property type="entry name" value="tRNA_STrfase"/>
</dbReference>
<dbReference type="InterPro" id="IPR050102">
    <property type="entry name" value="tRNA_sulfurtransferase_ThiI"/>
</dbReference>
<dbReference type="NCBIfam" id="TIGR04271">
    <property type="entry name" value="ThiI_C_thiazole"/>
    <property type="match status" value="1"/>
</dbReference>
<dbReference type="NCBIfam" id="TIGR00342">
    <property type="entry name" value="tRNA uracil 4-sulfurtransferase ThiI"/>
    <property type="match status" value="1"/>
</dbReference>
<dbReference type="PANTHER" id="PTHR43209">
    <property type="entry name" value="TRNA SULFURTRANSFERASE"/>
    <property type="match status" value="1"/>
</dbReference>
<dbReference type="PANTHER" id="PTHR43209:SF1">
    <property type="entry name" value="TRNA SULFURTRANSFERASE"/>
    <property type="match status" value="1"/>
</dbReference>
<dbReference type="Pfam" id="PF00581">
    <property type="entry name" value="Rhodanese"/>
    <property type="match status" value="1"/>
</dbReference>
<dbReference type="Pfam" id="PF02568">
    <property type="entry name" value="ThiI"/>
    <property type="match status" value="1"/>
</dbReference>
<dbReference type="Pfam" id="PF22025">
    <property type="entry name" value="ThiI_fer"/>
    <property type="match status" value="1"/>
</dbReference>
<dbReference type="Pfam" id="PF02926">
    <property type="entry name" value="THUMP"/>
    <property type="match status" value="1"/>
</dbReference>
<dbReference type="SMART" id="SM00981">
    <property type="entry name" value="THUMP"/>
    <property type="match status" value="1"/>
</dbReference>
<dbReference type="SUPFAM" id="SSF52402">
    <property type="entry name" value="Adenine nucleotide alpha hydrolases-like"/>
    <property type="match status" value="1"/>
</dbReference>
<dbReference type="SUPFAM" id="SSF52821">
    <property type="entry name" value="Rhodanese/Cell cycle control phosphatase"/>
    <property type="match status" value="1"/>
</dbReference>
<dbReference type="SUPFAM" id="SSF143437">
    <property type="entry name" value="THUMP domain-like"/>
    <property type="match status" value="1"/>
</dbReference>
<dbReference type="PROSITE" id="PS50206">
    <property type="entry name" value="RHODANESE_3"/>
    <property type="match status" value="1"/>
</dbReference>
<dbReference type="PROSITE" id="PS51165">
    <property type="entry name" value="THUMP"/>
    <property type="match status" value="1"/>
</dbReference>
<feature type="chain" id="PRO_1000074313" description="tRNA sulfurtransferase">
    <location>
        <begin position="1"/>
        <end position="483"/>
    </location>
</feature>
<feature type="domain" description="THUMP" evidence="1">
    <location>
        <begin position="62"/>
        <end position="166"/>
    </location>
</feature>
<feature type="domain" description="Rhodanese" evidence="1">
    <location>
        <begin position="405"/>
        <end position="483"/>
    </location>
</feature>
<feature type="active site" description="Cysteine persulfide intermediate" evidence="1">
    <location>
        <position position="457"/>
    </location>
</feature>
<feature type="binding site" evidence="1">
    <location>
        <begin position="184"/>
        <end position="185"/>
    </location>
    <ligand>
        <name>ATP</name>
        <dbReference type="ChEBI" id="CHEBI:30616"/>
    </ligand>
</feature>
<feature type="binding site" evidence="1">
    <location>
        <position position="266"/>
    </location>
    <ligand>
        <name>ATP</name>
        <dbReference type="ChEBI" id="CHEBI:30616"/>
    </ligand>
</feature>
<feature type="binding site" evidence="1">
    <location>
        <position position="288"/>
    </location>
    <ligand>
        <name>ATP</name>
        <dbReference type="ChEBI" id="CHEBI:30616"/>
    </ligand>
</feature>
<feature type="binding site" evidence="1">
    <location>
        <position position="297"/>
    </location>
    <ligand>
        <name>ATP</name>
        <dbReference type="ChEBI" id="CHEBI:30616"/>
    </ligand>
</feature>
<feature type="disulfide bond" description="Redox-active" evidence="1">
    <location>
        <begin position="345"/>
        <end position="457"/>
    </location>
</feature>
<organism>
    <name type="scientific">Yersinia pseudotuberculosis serotype I (strain IP32953)</name>
    <dbReference type="NCBI Taxonomy" id="273123"/>
    <lineage>
        <taxon>Bacteria</taxon>
        <taxon>Pseudomonadati</taxon>
        <taxon>Pseudomonadota</taxon>
        <taxon>Gammaproteobacteria</taxon>
        <taxon>Enterobacterales</taxon>
        <taxon>Yersiniaceae</taxon>
        <taxon>Yersinia</taxon>
    </lineage>
</organism>
<accession>Q66DV0</accession>
<evidence type="ECO:0000255" key="1">
    <source>
        <dbReference type="HAMAP-Rule" id="MF_00021"/>
    </source>
</evidence>
<sequence length="483" mass="54836">MKFIIKLFPEITIKSQSVRLRFIKILTTNIRNVLKHLEDDTLAIVRHWDHIELRTKDGNLGPEICDALTRIPGIHHILEVEDRSYSDMHNIFEQTLEAYRETLVGKTFCVRVKRRGKHEFSSGDVERYVGGGLNQHIESAKVNLTRPQVTVNLEVDQDKLILVKARHEGLGGFPIGTQEDVLSLISGGFDSGVSSYMLMRRGCRVHYCFFNLGGSAHEIGVKQVAHYLWNRFGSSHRVRFIAIDFEPVVGEILEKVEDGQMGVVLKRMMVRAASQVAERYGVQALVTGEALGQVSSQTLTNLRLIDNASDTLILRPLISHDKEHIINLARQIGTEDFAKTMPEYCGVISKSPTVKAVKAKIEEEESHFDFSILDRVVSEAKNVDIREIAQQSREQVVEVETVAELADTDVLLDIRAPDEQEEKPLKLDQVEVRSLPFYKLSSQFADLDQSKTYLLYCDRGVMSRLQALYLREQGYTNVKVYRP</sequence>
<reference key="1">
    <citation type="journal article" date="2004" name="Proc. Natl. Acad. Sci. U.S.A.">
        <title>Insights into the evolution of Yersinia pestis through whole-genome comparison with Yersinia pseudotuberculosis.</title>
        <authorList>
            <person name="Chain P.S.G."/>
            <person name="Carniel E."/>
            <person name="Larimer F.W."/>
            <person name="Lamerdin J."/>
            <person name="Stoutland P.O."/>
            <person name="Regala W.M."/>
            <person name="Georgescu A.M."/>
            <person name="Vergez L.M."/>
            <person name="Land M.L."/>
            <person name="Motin V.L."/>
            <person name="Brubaker R.R."/>
            <person name="Fowler J."/>
            <person name="Hinnebusch J."/>
            <person name="Marceau M."/>
            <person name="Medigue C."/>
            <person name="Simonet M."/>
            <person name="Chenal-Francisque V."/>
            <person name="Souza B."/>
            <person name="Dacheux D."/>
            <person name="Elliott J.M."/>
            <person name="Derbise A."/>
            <person name="Hauser L.J."/>
            <person name="Garcia E."/>
        </authorList>
    </citation>
    <scope>NUCLEOTIDE SEQUENCE [LARGE SCALE GENOMIC DNA]</scope>
    <source>
        <strain>IP32953</strain>
    </source>
</reference>
<name>THII_YERPS</name>